<protein>
    <recommendedName>
        <fullName evidence="4">Style cell-cycle inhibitor 1-A</fullName>
        <shortName evidence="4">NtSCI1</shortName>
    </recommendedName>
</protein>
<proteinExistence type="evidence at transcript level"/>
<organism>
    <name type="scientific">Nicotiana tabacum</name>
    <name type="common">Common tobacco</name>
    <dbReference type="NCBI Taxonomy" id="4097"/>
    <lineage>
        <taxon>Eukaryota</taxon>
        <taxon>Viridiplantae</taxon>
        <taxon>Streptophyta</taxon>
        <taxon>Embryophyta</taxon>
        <taxon>Tracheophyta</taxon>
        <taxon>Spermatophyta</taxon>
        <taxon>Magnoliopsida</taxon>
        <taxon>eudicotyledons</taxon>
        <taxon>Gunneridae</taxon>
        <taxon>Pentapetalae</taxon>
        <taxon>asterids</taxon>
        <taxon>lamiids</taxon>
        <taxon>Solanales</taxon>
        <taxon>Solanaceae</taxon>
        <taxon>Nicotianoideae</taxon>
        <taxon>Nicotianeae</taxon>
        <taxon>Nicotiana</taxon>
    </lineage>
</organism>
<dbReference type="EMBL" id="GQ272329">
    <property type="protein sequence ID" value="ADG60253.1"/>
    <property type="molecule type" value="mRNA"/>
</dbReference>
<dbReference type="EMBL" id="GQ272331">
    <property type="protein sequence ID" value="ADG60255.1"/>
    <property type="molecule type" value="mRNA"/>
</dbReference>
<dbReference type="SMR" id="A0A1S4AX27"/>
<dbReference type="STRING" id="4097.A0A1S4AX27"/>
<dbReference type="PaxDb" id="4097-A0A1S4AX27"/>
<dbReference type="Proteomes" id="UP000084051">
    <property type="component" value="Unplaced"/>
</dbReference>
<dbReference type="GO" id="GO:0005634">
    <property type="term" value="C:nucleus"/>
    <property type="evidence" value="ECO:0000314"/>
    <property type="project" value="UniProtKB"/>
</dbReference>
<dbReference type="GO" id="GO:0009734">
    <property type="term" value="P:auxin-activated signaling pathway"/>
    <property type="evidence" value="ECO:0007669"/>
    <property type="project" value="UniProtKB-KW"/>
</dbReference>
<dbReference type="GO" id="GO:0051301">
    <property type="term" value="P:cell division"/>
    <property type="evidence" value="ECO:0007669"/>
    <property type="project" value="UniProtKB-KW"/>
</dbReference>
<dbReference type="GO" id="GO:0051782">
    <property type="term" value="P:negative regulation of cell division"/>
    <property type="evidence" value="ECO:0000315"/>
    <property type="project" value="UniProtKB"/>
</dbReference>
<dbReference type="GO" id="GO:0010928">
    <property type="term" value="P:regulation of auxin mediated signaling pathway"/>
    <property type="evidence" value="ECO:0000315"/>
    <property type="project" value="UniProtKB"/>
</dbReference>
<dbReference type="GO" id="GO:0048480">
    <property type="term" value="P:stigma development"/>
    <property type="evidence" value="ECO:0000315"/>
    <property type="project" value="UniProtKB"/>
</dbReference>
<dbReference type="GO" id="GO:0048479">
    <property type="term" value="P:style development"/>
    <property type="evidence" value="ECO:0000315"/>
    <property type="project" value="UniProtKB"/>
</dbReference>
<dbReference type="InterPro" id="IPR044688">
    <property type="entry name" value="SCI-1-like"/>
</dbReference>
<dbReference type="PANTHER" id="PTHR34117">
    <property type="entry name" value="STYLE CELL-CYCLE INHIBITOR 1"/>
    <property type="match status" value="1"/>
</dbReference>
<dbReference type="PANTHER" id="PTHR34117:SF1">
    <property type="entry name" value="STYLE CELL-CYCLE INHIBITOR 1"/>
    <property type="match status" value="1"/>
</dbReference>
<evidence type="ECO:0000256" key="1">
    <source>
        <dbReference type="SAM" id="MobiDB-lite"/>
    </source>
</evidence>
<evidence type="ECO:0000269" key="2">
    <source>
    </source>
</evidence>
<evidence type="ECO:0000269" key="3">
    <source>
    </source>
</evidence>
<evidence type="ECO:0000303" key="4">
    <source>
    </source>
</evidence>
<evidence type="ECO:0000305" key="5"/>
<feature type="chain" id="PRO_0000444450" description="Style cell-cycle inhibitor 1-A">
    <location>
        <begin position="1"/>
        <end position="154"/>
    </location>
</feature>
<feature type="region of interest" description="Disordered" evidence="1">
    <location>
        <begin position="1"/>
        <end position="84"/>
    </location>
</feature>
<feature type="compositionally biased region" description="Basic and acidic residues" evidence="1">
    <location>
        <begin position="1"/>
        <end position="11"/>
    </location>
</feature>
<feature type="compositionally biased region" description="Basic and acidic residues" evidence="1">
    <location>
        <begin position="24"/>
        <end position="48"/>
    </location>
</feature>
<feature type="compositionally biased region" description="Basic residues" evidence="1">
    <location>
        <begin position="63"/>
        <end position="77"/>
    </location>
</feature>
<feature type="sequence conflict" description="In Ref. 1; ADG60253." evidence="5" ref="1">
    <original>L</original>
    <variation>R</variation>
    <location>
        <position position="23"/>
    </location>
</feature>
<keyword id="KW-0927">Auxin signaling pathway</keyword>
<keyword id="KW-0131">Cell cycle</keyword>
<keyword id="KW-0132">Cell division</keyword>
<keyword id="KW-0217">Developmental protein</keyword>
<keyword id="KW-0539">Nucleus</keyword>
<keyword id="KW-1185">Reference proteome</keyword>
<sequence length="154" mass="18147">MGSDKKTPEEKRKHKRSSPSSPLDEVKSKRQNIKGDEERRKEKKDKSKKEKHKSHSSEEKKSGEKHKTKSHKHKDKSKNKFEELSKDDYFSKNNEFATWLKDKKNLFFSDLSSETARDLFSDFVIQWNKGKLDSQYYEGIATGPRSSHAWNIKK</sequence>
<accession>A0A1S4AX27</accession>
<accession>F8QMT0</accession>
<accession>F8QMT2</accession>
<reference key="1">
    <citation type="journal article" date="2011" name="New Phytol.">
        <title>Stigma/style cell cycle inhibitor 1 (SCI1), a tissue-specific cell cycle regulator that controls upper pistil development.</title>
        <authorList>
            <person name="Depaoli H.C."/>
            <person name="Brito M.S."/>
            <person name="Quiapim A.C."/>
            <person name="Teixeira S.P."/>
            <person name="Goldman G.H."/>
            <person name="Dornelas M.C."/>
            <person name="Goldman M.-H.S."/>
        </authorList>
    </citation>
    <scope>NUCLEOTIDE SEQUENCE [MRNA]</scope>
    <scope>FUNCTION</scope>
    <scope>DISRUPTION PHENOTYPE</scope>
    <scope>SUBCELLULAR LOCATION</scope>
    <scope>TISSUE SPECIFICITY</scope>
    <scope>DEVELOPMENTAL STAGE</scope>
    <source>
        <strain>cv. Petit Havana SR1</strain>
    </source>
</reference>
<reference key="2">
    <citation type="journal article" date="2014" name="Nat. Commun.">
        <title>The tobacco genome sequence and its comparison with those of tomato and potato.</title>
        <authorList>
            <person name="Sierro N."/>
            <person name="Battey J.N."/>
            <person name="Ouadi S."/>
            <person name="Bakaher N."/>
            <person name="Bovet L."/>
            <person name="Willig A."/>
            <person name="Goepfert S."/>
            <person name="Peitsch M.C."/>
            <person name="Ivanov N.V."/>
        </authorList>
    </citation>
    <scope>NUCLEOTIDE SEQUENCE [LARGE SCALE GENOMIC DNA]</scope>
    <source>
        <strain>cv. TN90</strain>
    </source>
</reference>
<reference key="3">
    <citation type="journal article" date="2012" name="Plant Signal. Behav.">
        <title>SCI1, the first member of the tissue-specific inhibitors of CDK (TIC) class, is probably connected to the auxin signaling pathway.</title>
        <authorList>
            <person name="DePaoli H.C."/>
            <person name="Goldman G.H."/>
            <person name="Goldman M.-H.S."/>
        </authorList>
    </citation>
    <scope>FUNCTION</scope>
</reference>
<name>SCI1A_TOBAC</name>
<comment type="function">
    <text evidence="2 3">Component of the auxin signaling transduction pathway that regulates cell proliferation and differentiation during flowers stigmas and styles development (PubMed:21388377). Involved in the regulation of auxin-related genes (PubMed:22301969).</text>
</comment>
<comment type="subcellular location">
    <subcellularLocation>
        <location evidence="2">Nucleus</location>
    </subcellularLocation>
    <text evidence="2">Inside the nucleus, confined to the interchromatic region.</text>
</comment>
<comment type="tissue specificity">
    <text evidence="2">Specifically expressed in flowers pistils, especially in stigmas and styles. Barely detected in roots, stems, leaves, sepals, petals and stamen.</text>
</comment>
<comment type="developmental stage">
    <text evidence="2">Expressed at high levels at the early stages of pistil development (stages 1 to 6) and disappears towards anthesis (stages 7 to 12). At stage 4, observed in the stigmatic secretory zone, including the papillar cells, and in the stylar transmitting tissue. Expressed in stigma and style specialized tissues at initial stages of flower development.</text>
</comment>
<comment type="disruption phenotype">
    <text evidence="2">Enlarged stigmas and styles due to increased in cell numbers.</text>
</comment>
<gene>
    <name evidence="4" type="primary">SCI1A</name>
</gene>